<accession>Q81TU4</accession>
<accession>Q6I227</accession>
<accession>Q6KVW5</accession>
<evidence type="ECO:0000255" key="1">
    <source>
        <dbReference type="HAMAP-Rule" id="MF_00632"/>
    </source>
</evidence>
<comment type="function">
    <text evidence="1">Nucleotide-binding protein.</text>
</comment>
<comment type="similarity">
    <text evidence="1">Belongs to the YajQ family.</text>
</comment>
<sequence>MAKDSSFDIVSKVELPEVTNAINTALKEIQNRYDFKGSKSDIKLEKEVLVLTSDDEFKLEQVKDVLISKLVKRNVPIKNLDYGKVEAAAGNTVRQRATLQQGIDKDNAKKINNIIKEMKLKVKTQVQDDQVRVTAKSRDDLQAVIAAVRSADLPIDVQFINYR</sequence>
<protein>
    <recommendedName>
        <fullName evidence="1">Nucleotide-binding protein BA_1166</fullName>
    </recommendedName>
</protein>
<name>Y1166_BACAN</name>
<reference key="1">
    <citation type="journal article" date="2003" name="Nature">
        <title>The genome sequence of Bacillus anthracis Ames and comparison to closely related bacteria.</title>
        <authorList>
            <person name="Read T.D."/>
            <person name="Peterson S.N."/>
            <person name="Tourasse N.J."/>
            <person name="Baillie L.W."/>
            <person name="Paulsen I.T."/>
            <person name="Nelson K.E."/>
            <person name="Tettelin H."/>
            <person name="Fouts D.E."/>
            <person name="Eisen J.A."/>
            <person name="Gill S.R."/>
            <person name="Holtzapple E.K."/>
            <person name="Okstad O.A."/>
            <person name="Helgason E."/>
            <person name="Rilstone J."/>
            <person name="Wu M."/>
            <person name="Kolonay J.F."/>
            <person name="Beanan M.J."/>
            <person name="Dodson R.J."/>
            <person name="Brinkac L.M."/>
            <person name="Gwinn M.L."/>
            <person name="DeBoy R.T."/>
            <person name="Madpu R."/>
            <person name="Daugherty S.C."/>
            <person name="Durkin A.S."/>
            <person name="Haft D.H."/>
            <person name="Nelson W.C."/>
            <person name="Peterson J.D."/>
            <person name="Pop M."/>
            <person name="Khouri H.M."/>
            <person name="Radune D."/>
            <person name="Benton J.L."/>
            <person name="Mahamoud Y."/>
            <person name="Jiang L."/>
            <person name="Hance I.R."/>
            <person name="Weidman J.F."/>
            <person name="Berry K.J."/>
            <person name="Plaut R.D."/>
            <person name="Wolf A.M."/>
            <person name="Watkins K.L."/>
            <person name="Nierman W.C."/>
            <person name="Hazen A."/>
            <person name="Cline R.T."/>
            <person name="Redmond C."/>
            <person name="Thwaite J.E."/>
            <person name="White O."/>
            <person name="Salzberg S.L."/>
            <person name="Thomason B."/>
            <person name="Friedlander A.M."/>
            <person name="Koehler T.M."/>
            <person name="Hanna P.C."/>
            <person name="Kolstoe A.-B."/>
            <person name="Fraser C.M."/>
        </authorList>
    </citation>
    <scope>NUCLEOTIDE SEQUENCE [LARGE SCALE GENOMIC DNA]</scope>
    <source>
        <strain>Ames / isolate Porton</strain>
    </source>
</reference>
<reference key="2">
    <citation type="journal article" date="2009" name="J. Bacteriol.">
        <title>The complete genome sequence of Bacillus anthracis Ames 'Ancestor'.</title>
        <authorList>
            <person name="Ravel J."/>
            <person name="Jiang L."/>
            <person name="Stanley S.T."/>
            <person name="Wilson M.R."/>
            <person name="Decker R.S."/>
            <person name="Read T.D."/>
            <person name="Worsham P."/>
            <person name="Keim P.S."/>
            <person name="Salzberg S.L."/>
            <person name="Fraser-Liggett C.M."/>
            <person name="Rasko D.A."/>
        </authorList>
    </citation>
    <scope>NUCLEOTIDE SEQUENCE [LARGE SCALE GENOMIC DNA]</scope>
    <source>
        <strain>Ames ancestor</strain>
    </source>
</reference>
<reference key="3">
    <citation type="submission" date="2004-01" db="EMBL/GenBank/DDBJ databases">
        <title>Complete genome sequence of Bacillus anthracis Sterne.</title>
        <authorList>
            <person name="Brettin T.S."/>
            <person name="Bruce D."/>
            <person name="Challacombe J.F."/>
            <person name="Gilna P."/>
            <person name="Han C."/>
            <person name="Hill K."/>
            <person name="Hitchcock P."/>
            <person name="Jackson P."/>
            <person name="Keim P."/>
            <person name="Longmire J."/>
            <person name="Lucas S."/>
            <person name="Okinaka R."/>
            <person name="Richardson P."/>
            <person name="Rubin E."/>
            <person name="Tice H."/>
        </authorList>
    </citation>
    <scope>NUCLEOTIDE SEQUENCE [LARGE SCALE GENOMIC DNA]</scope>
    <source>
        <strain>Sterne</strain>
    </source>
</reference>
<dbReference type="EMBL" id="AE016879">
    <property type="protein sequence ID" value="AAP25131.1"/>
    <property type="molecule type" value="Genomic_DNA"/>
</dbReference>
<dbReference type="EMBL" id="AE017334">
    <property type="protein sequence ID" value="AAT30255.1"/>
    <property type="molecule type" value="Genomic_DNA"/>
</dbReference>
<dbReference type="EMBL" id="AE017225">
    <property type="protein sequence ID" value="AAT53404.1"/>
    <property type="molecule type" value="Genomic_DNA"/>
</dbReference>
<dbReference type="RefSeq" id="NP_843645.1">
    <property type="nucleotide sequence ID" value="NC_003997.3"/>
</dbReference>
<dbReference type="RefSeq" id="WP_001040153.1">
    <property type="nucleotide sequence ID" value="NZ_WXXJ01000044.1"/>
</dbReference>
<dbReference type="RefSeq" id="YP_027353.1">
    <property type="nucleotide sequence ID" value="NC_005945.1"/>
</dbReference>
<dbReference type="SMR" id="Q81TU4"/>
<dbReference type="IntAct" id="Q81TU4">
    <property type="interactions" value="2"/>
</dbReference>
<dbReference type="STRING" id="261594.GBAA_1166"/>
<dbReference type="DNASU" id="1089184"/>
<dbReference type="KEGG" id="ban:BA_1166"/>
<dbReference type="KEGG" id="bar:GBAA_1166"/>
<dbReference type="KEGG" id="bat:BAS1081"/>
<dbReference type="PATRIC" id="fig|198094.11.peg.1145"/>
<dbReference type="eggNOG" id="COG1666">
    <property type="taxonomic scope" value="Bacteria"/>
</dbReference>
<dbReference type="HOGENOM" id="CLU_099839_1_0_9"/>
<dbReference type="OMA" id="DFKGVGA"/>
<dbReference type="Proteomes" id="UP000000427">
    <property type="component" value="Chromosome"/>
</dbReference>
<dbReference type="Proteomes" id="UP000000594">
    <property type="component" value="Chromosome"/>
</dbReference>
<dbReference type="GO" id="GO:0005829">
    <property type="term" value="C:cytosol"/>
    <property type="evidence" value="ECO:0007669"/>
    <property type="project" value="TreeGrafter"/>
</dbReference>
<dbReference type="GO" id="GO:0000166">
    <property type="term" value="F:nucleotide binding"/>
    <property type="evidence" value="ECO:0007669"/>
    <property type="project" value="TreeGrafter"/>
</dbReference>
<dbReference type="CDD" id="cd11740">
    <property type="entry name" value="YajQ_like"/>
    <property type="match status" value="1"/>
</dbReference>
<dbReference type="FunFam" id="3.30.70.990:FF:000002">
    <property type="entry name" value="UPF0234 protein LEP1GSC067_4943"/>
    <property type="match status" value="1"/>
</dbReference>
<dbReference type="FunFam" id="3.30.70.860:FF:000003">
    <property type="entry name" value="UPF0234 protein YBT020_06460"/>
    <property type="match status" value="1"/>
</dbReference>
<dbReference type="Gene3D" id="3.30.70.860">
    <property type="match status" value="1"/>
</dbReference>
<dbReference type="Gene3D" id="3.30.70.990">
    <property type="entry name" value="YajQ-like, domain 2"/>
    <property type="match status" value="1"/>
</dbReference>
<dbReference type="HAMAP" id="MF_00632">
    <property type="entry name" value="YajQ"/>
    <property type="match status" value="1"/>
</dbReference>
<dbReference type="InterPro" id="IPR007551">
    <property type="entry name" value="DUF520"/>
</dbReference>
<dbReference type="InterPro" id="IPR035571">
    <property type="entry name" value="UPF0234-like_C"/>
</dbReference>
<dbReference type="InterPro" id="IPR035570">
    <property type="entry name" value="UPF0234_N"/>
</dbReference>
<dbReference type="InterPro" id="IPR036183">
    <property type="entry name" value="YajQ-like_sf"/>
</dbReference>
<dbReference type="NCBIfam" id="NF003819">
    <property type="entry name" value="PRK05412.1"/>
    <property type="match status" value="1"/>
</dbReference>
<dbReference type="PANTHER" id="PTHR30476">
    <property type="entry name" value="UPF0234 PROTEIN YAJQ"/>
    <property type="match status" value="1"/>
</dbReference>
<dbReference type="PANTHER" id="PTHR30476:SF0">
    <property type="entry name" value="UPF0234 PROTEIN YAJQ"/>
    <property type="match status" value="1"/>
</dbReference>
<dbReference type="Pfam" id="PF04461">
    <property type="entry name" value="DUF520"/>
    <property type="match status" value="1"/>
</dbReference>
<dbReference type="SUPFAM" id="SSF89963">
    <property type="entry name" value="YajQ-like"/>
    <property type="match status" value="2"/>
</dbReference>
<feature type="chain" id="PRO_0000106170" description="Nucleotide-binding protein BA_1166">
    <location>
        <begin position="1"/>
        <end position="163"/>
    </location>
</feature>
<keyword id="KW-0547">Nucleotide-binding</keyword>
<keyword id="KW-1185">Reference proteome</keyword>
<proteinExistence type="inferred from homology"/>
<gene>
    <name type="ordered locus">BA_1166</name>
    <name type="ordered locus">GBAA_1166</name>
    <name type="ordered locus">BAS1081</name>
</gene>
<organism>
    <name type="scientific">Bacillus anthracis</name>
    <dbReference type="NCBI Taxonomy" id="1392"/>
    <lineage>
        <taxon>Bacteria</taxon>
        <taxon>Bacillati</taxon>
        <taxon>Bacillota</taxon>
        <taxon>Bacilli</taxon>
        <taxon>Bacillales</taxon>
        <taxon>Bacillaceae</taxon>
        <taxon>Bacillus</taxon>
        <taxon>Bacillus cereus group</taxon>
    </lineage>
</organism>